<gene>
    <name type="primary">MDH2</name>
    <name type="ordered locus">YOL126C</name>
</gene>
<comment type="function">
    <text>The isoenzyme MDH2 may function primarily in the glyoxylate cycle.</text>
</comment>
<comment type="catalytic activity">
    <reaction evidence="3">
        <text>(S)-malate + NAD(+) = oxaloacetate + NADH + H(+)</text>
        <dbReference type="Rhea" id="RHEA:21432"/>
        <dbReference type="ChEBI" id="CHEBI:15378"/>
        <dbReference type="ChEBI" id="CHEBI:15589"/>
        <dbReference type="ChEBI" id="CHEBI:16452"/>
        <dbReference type="ChEBI" id="CHEBI:57540"/>
        <dbReference type="ChEBI" id="CHEBI:57945"/>
        <dbReference type="EC" id="1.1.1.37"/>
    </reaction>
</comment>
<comment type="subunit">
    <text evidence="2">Homodimer.</text>
</comment>
<comment type="subcellular location">
    <subcellularLocation>
        <location>Cytoplasm</location>
    </subcellularLocation>
</comment>
<comment type="induction">
    <text>By acetate as carbon source in the growth medium. Is inactivated by addition of glucose (catabolite inactivation).</text>
</comment>
<comment type="domain">
    <text evidence="6">The Pro/N-degron targets the protein for proteasomal degradation when cells are shifted to glucose-containing growth medium.</text>
</comment>
<comment type="PTM">
    <text evidence="6">Targeted for proteasomal degradation when cells are shifted to glucose-containing growth medium.</text>
</comment>
<comment type="miscellaneous">
    <text>Yeast contains at least 3 malate dehydrogenase isoenzymes: a mitochondrial (MDH1), a cytoplasmic (MDH2) and a peroxisomal (MDH3).</text>
</comment>
<comment type="miscellaneous">
    <text evidence="4">Present with 5260 molecules/cell in log phase SD medium.</text>
</comment>
<comment type="similarity">
    <text evidence="8">Belongs to the LDH/MDH superfamily. MDH type 1 family.</text>
</comment>
<comment type="sequence caution" evidence="8">
    <conflict type="erroneous initiation">
        <sequence resource="EMBL-CDS" id="AAC49466"/>
    </conflict>
</comment>
<comment type="sequence caution" evidence="8">
    <conflict type="erroneous initiation">
        <sequence resource="EMBL-CDS" id="CAA99145"/>
    </conflict>
</comment>
<dbReference type="EC" id="1.1.1.37"/>
<dbReference type="EMBL" id="M62808">
    <property type="protein sequence ID" value="AAA34766.1"/>
    <property type="molecule type" value="Genomic_DNA"/>
</dbReference>
<dbReference type="EMBL" id="U41293">
    <property type="protein sequence ID" value="AAC49466.1"/>
    <property type="status" value="ALT_INIT"/>
    <property type="molecule type" value="Genomic_DNA"/>
</dbReference>
<dbReference type="EMBL" id="Z74868">
    <property type="protein sequence ID" value="CAA99145.1"/>
    <property type="status" value="ALT_INIT"/>
    <property type="molecule type" value="Genomic_DNA"/>
</dbReference>
<dbReference type="EMBL" id="BK006948">
    <property type="protein sequence ID" value="DAA10658.1"/>
    <property type="molecule type" value="Genomic_DNA"/>
</dbReference>
<dbReference type="PIR" id="S63444">
    <property type="entry name" value="DEBYMC"/>
</dbReference>
<dbReference type="RefSeq" id="NP_014515.2">
    <property type="nucleotide sequence ID" value="NM_001183380.1"/>
</dbReference>
<dbReference type="SMR" id="P22133"/>
<dbReference type="BioGRID" id="34249">
    <property type="interactions" value="191"/>
</dbReference>
<dbReference type="DIP" id="DIP-4211N"/>
<dbReference type="FunCoup" id="P22133">
    <property type="interactions" value="308"/>
</dbReference>
<dbReference type="IntAct" id="P22133">
    <property type="interactions" value="50"/>
</dbReference>
<dbReference type="MINT" id="P22133"/>
<dbReference type="STRING" id="4932.YOL126C"/>
<dbReference type="GlyGen" id="P22133">
    <property type="glycosylation" value="1 site"/>
</dbReference>
<dbReference type="iPTMnet" id="P22133"/>
<dbReference type="PaxDb" id="4932-YOL126C"/>
<dbReference type="PeptideAtlas" id="P22133"/>
<dbReference type="EnsemblFungi" id="YOL126C_mRNA">
    <property type="protein sequence ID" value="YOL126C"/>
    <property type="gene ID" value="YOL126C"/>
</dbReference>
<dbReference type="GeneID" id="853994"/>
<dbReference type="KEGG" id="sce:YOL126C"/>
<dbReference type="AGR" id="SGD:S000005486"/>
<dbReference type="SGD" id="S000005486">
    <property type="gene designation" value="MDH2"/>
</dbReference>
<dbReference type="VEuPathDB" id="FungiDB:YOL126C"/>
<dbReference type="eggNOG" id="KOG1494">
    <property type="taxonomic scope" value="Eukaryota"/>
</dbReference>
<dbReference type="GeneTree" id="ENSGT00390000016686"/>
<dbReference type="HOGENOM" id="CLU_047181_1_0_1"/>
<dbReference type="InParanoid" id="P22133"/>
<dbReference type="OMA" id="FGCAVEL"/>
<dbReference type="OrthoDB" id="4069699at2759"/>
<dbReference type="BioCyc" id="YEAST:YOL126C-MONOMER"/>
<dbReference type="BRENDA" id="1.1.1.37">
    <property type="organism ID" value="984"/>
</dbReference>
<dbReference type="Reactome" id="R-SCE-71403">
    <property type="pathway name" value="Citric acid cycle (TCA cycle)"/>
</dbReference>
<dbReference type="Reactome" id="R-SCE-9837999">
    <property type="pathway name" value="Mitochondrial protein degradation"/>
</dbReference>
<dbReference type="Reactome" id="R-SCE-9856872">
    <property type="pathway name" value="Malate-aspartate shuttle"/>
</dbReference>
<dbReference type="SABIO-RK" id="P22133"/>
<dbReference type="BioGRID-ORCS" id="853994">
    <property type="hits" value="8 hits in 10 CRISPR screens"/>
</dbReference>
<dbReference type="PRO" id="PR:P22133"/>
<dbReference type="Proteomes" id="UP000002311">
    <property type="component" value="Chromosome XV"/>
</dbReference>
<dbReference type="RNAct" id="P22133">
    <property type="molecule type" value="protein"/>
</dbReference>
<dbReference type="GO" id="GO:0005737">
    <property type="term" value="C:cytoplasm"/>
    <property type="evidence" value="ECO:0007005"/>
    <property type="project" value="SGD"/>
</dbReference>
<dbReference type="GO" id="GO:0005829">
    <property type="term" value="C:cytosol"/>
    <property type="evidence" value="ECO:0000314"/>
    <property type="project" value="SGD"/>
</dbReference>
<dbReference type="GO" id="GO:0034399">
    <property type="term" value="C:nuclear periphery"/>
    <property type="evidence" value="ECO:0000314"/>
    <property type="project" value="SGD"/>
</dbReference>
<dbReference type="GO" id="GO:0030060">
    <property type="term" value="F:L-malate dehydrogenase (NAD+) activity"/>
    <property type="evidence" value="ECO:0000314"/>
    <property type="project" value="SGD"/>
</dbReference>
<dbReference type="GO" id="GO:0006094">
    <property type="term" value="P:gluconeogenesis"/>
    <property type="evidence" value="ECO:0000315"/>
    <property type="project" value="SGD"/>
</dbReference>
<dbReference type="GO" id="GO:0006108">
    <property type="term" value="P:malate metabolic process"/>
    <property type="evidence" value="ECO:0007669"/>
    <property type="project" value="InterPro"/>
</dbReference>
<dbReference type="GO" id="GO:0016558">
    <property type="term" value="P:protein import into peroxisome matrix"/>
    <property type="evidence" value="ECO:0000315"/>
    <property type="project" value="SGD"/>
</dbReference>
<dbReference type="GO" id="GO:0006099">
    <property type="term" value="P:tricarboxylic acid cycle"/>
    <property type="evidence" value="ECO:0007669"/>
    <property type="project" value="UniProtKB-KW"/>
</dbReference>
<dbReference type="CDD" id="cd01337">
    <property type="entry name" value="MDH_glyoxysomal_mitochondrial"/>
    <property type="match status" value="1"/>
</dbReference>
<dbReference type="FunFam" id="3.40.50.720:FF:000268">
    <property type="entry name" value="Malate dehydrogenase"/>
    <property type="match status" value="1"/>
</dbReference>
<dbReference type="FunFam" id="3.90.110.10:FF:000009">
    <property type="entry name" value="Malate dehydrogenase"/>
    <property type="match status" value="1"/>
</dbReference>
<dbReference type="Gene3D" id="3.90.110.10">
    <property type="entry name" value="Lactate dehydrogenase/glycoside hydrolase, family 4, C-terminal"/>
    <property type="match status" value="1"/>
</dbReference>
<dbReference type="Gene3D" id="3.40.50.720">
    <property type="entry name" value="NAD(P)-binding Rossmann-like Domain"/>
    <property type="match status" value="1"/>
</dbReference>
<dbReference type="InterPro" id="IPR001557">
    <property type="entry name" value="L-lactate/malate_DH"/>
</dbReference>
<dbReference type="InterPro" id="IPR022383">
    <property type="entry name" value="Lactate/malate_DH_C"/>
</dbReference>
<dbReference type="InterPro" id="IPR001236">
    <property type="entry name" value="Lactate/malate_DH_N"/>
</dbReference>
<dbReference type="InterPro" id="IPR015955">
    <property type="entry name" value="Lactate_DH/Glyco_Ohase_4_C"/>
</dbReference>
<dbReference type="InterPro" id="IPR001252">
    <property type="entry name" value="Malate_DH_AS"/>
</dbReference>
<dbReference type="InterPro" id="IPR010097">
    <property type="entry name" value="Malate_DH_type1"/>
</dbReference>
<dbReference type="InterPro" id="IPR036291">
    <property type="entry name" value="NAD(P)-bd_dom_sf"/>
</dbReference>
<dbReference type="NCBIfam" id="TIGR01772">
    <property type="entry name" value="MDH_euk_gproteo"/>
    <property type="match status" value="1"/>
</dbReference>
<dbReference type="PANTHER" id="PTHR11540">
    <property type="entry name" value="MALATE AND LACTATE DEHYDROGENASE"/>
    <property type="match status" value="1"/>
</dbReference>
<dbReference type="PANTHER" id="PTHR11540:SF16">
    <property type="entry name" value="MALATE DEHYDROGENASE, MITOCHONDRIAL"/>
    <property type="match status" value="1"/>
</dbReference>
<dbReference type="Pfam" id="PF02866">
    <property type="entry name" value="Ldh_1_C"/>
    <property type="match status" value="1"/>
</dbReference>
<dbReference type="Pfam" id="PF00056">
    <property type="entry name" value="Ldh_1_N"/>
    <property type="match status" value="1"/>
</dbReference>
<dbReference type="PIRSF" id="PIRSF000102">
    <property type="entry name" value="Lac_mal_DH"/>
    <property type="match status" value="1"/>
</dbReference>
<dbReference type="SUPFAM" id="SSF56327">
    <property type="entry name" value="LDH C-terminal domain-like"/>
    <property type="match status" value="1"/>
</dbReference>
<dbReference type="SUPFAM" id="SSF51735">
    <property type="entry name" value="NAD(P)-binding Rossmann-fold domains"/>
    <property type="match status" value="1"/>
</dbReference>
<dbReference type="PROSITE" id="PS00068">
    <property type="entry name" value="MDH"/>
    <property type="match status" value="1"/>
</dbReference>
<name>MDHC_YEAST</name>
<organism>
    <name type="scientific">Saccharomyces cerevisiae (strain ATCC 204508 / S288c)</name>
    <name type="common">Baker's yeast</name>
    <dbReference type="NCBI Taxonomy" id="559292"/>
    <lineage>
        <taxon>Eukaryota</taxon>
        <taxon>Fungi</taxon>
        <taxon>Dikarya</taxon>
        <taxon>Ascomycota</taxon>
        <taxon>Saccharomycotina</taxon>
        <taxon>Saccharomycetes</taxon>
        <taxon>Saccharomycetales</taxon>
        <taxon>Saccharomycetaceae</taxon>
        <taxon>Saccharomyces</taxon>
    </lineage>
</organism>
<feature type="initiator methionine" description="Removed" evidence="5 7">
    <location>
        <position position="1"/>
    </location>
</feature>
<feature type="chain" id="PRO_0000113338" description="Malate dehydrogenase, cytoplasmic">
    <location>
        <begin position="2"/>
        <end position="377"/>
    </location>
</feature>
<feature type="short sequence motif" description="Pro/N-degron" evidence="6">
    <location>
        <begin position="2"/>
        <end position="5"/>
    </location>
</feature>
<feature type="active site" description="Proton acceptor" evidence="1">
    <location>
        <position position="215"/>
    </location>
</feature>
<feature type="binding site" evidence="2">
    <location>
        <begin position="20"/>
        <end position="26"/>
    </location>
    <ligand>
        <name>NAD(+)</name>
        <dbReference type="ChEBI" id="CHEBI:57540"/>
    </ligand>
</feature>
<feature type="binding site" evidence="2">
    <location>
        <position position="57"/>
    </location>
    <ligand>
        <name>NAD(+)</name>
        <dbReference type="ChEBI" id="CHEBI:57540"/>
    </ligand>
</feature>
<feature type="binding site" evidence="3">
    <location>
        <position position="106"/>
    </location>
    <ligand>
        <name>substrate</name>
    </ligand>
</feature>
<feature type="binding site" evidence="3">
    <location>
        <position position="112"/>
    </location>
    <ligand>
        <name>substrate</name>
    </ligand>
</feature>
<feature type="binding site" evidence="2">
    <location>
        <position position="119"/>
    </location>
    <ligand>
        <name>NAD(+)</name>
        <dbReference type="ChEBI" id="CHEBI:57540"/>
    </ligand>
</feature>
<feature type="binding site" evidence="2">
    <location>
        <begin position="144"/>
        <end position="146"/>
    </location>
    <ligand>
        <name>NAD(+)</name>
        <dbReference type="ChEBI" id="CHEBI:57540"/>
    </ligand>
</feature>
<feature type="binding site" evidence="3">
    <location>
        <position position="146"/>
    </location>
    <ligand>
        <name>substrate</name>
    </ligand>
</feature>
<feature type="binding site" evidence="3">
    <location>
        <position position="185"/>
    </location>
    <ligand>
        <name>substrate</name>
    </ligand>
</feature>
<feature type="binding site" evidence="2">
    <location>
        <position position="266"/>
    </location>
    <ligand>
        <name>NAD(+)</name>
        <dbReference type="ChEBI" id="CHEBI:57540"/>
    </ligand>
</feature>
<feature type="modified residue" description="Phosphothreonine" evidence="9">
    <location>
        <position position="6"/>
    </location>
</feature>
<keyword id="KW-0963">Cytoplasm</keyword>
<keyword id="KW-0903">Direct protein sequencing</keyword>
<keyword id="KW-0520">NAD</keyword>
<keyword id="KW-0560">Oxidoreductase</keyword>
<keyword id="KW-0597">Phosphoprotein</keyword>
<keyword id="KW-1185">Reference proteome</keyword>
<keyword id="KW-0816">Tricarboxylic acid cycle</keyword>
<sequence length="377" mass="40731">MPHSVTPSIEQDSLKIAILGAAGGIGQSLSLLLKAQLQYQLKESNRSVTHIHLALYDVNQEAINGVTADLSHIDTPISVSSHSPAGGIENCLHNASIVVIPAGVPRKPGMTRDDLFNVNAGIISQLGDSIAECCDLSKVFVLVISNPVNSLVPVMVSNILKNHPQSRNSGIERRIMGVTKLDIVRASTFLREINIESGLTPRVNSMPDVPVIGGHSGETIIPLFSQSNFLSRLNEDQLKYLIHRVQYGGDEVVKAKNGKGSATLSMAHAGYKCVVQFVSLLLGNIEQIHGTYYVPLKDANNFPIAPGADQLLPLVDGADYFAIPLTITTKGVSYVDYDIVNRMNDMERNQMLPICVSQLKKNIDKGLEFVASRSASS</sequence>
<accession>P22133</accession>
<accession>D6W1U2</accession>
<protein>
    <recommendedName>
        <fullName>Malate dehydrogenase, cytoplasmic</fullName>
        <ecNumber>1.1.1.37</ecNumber>
    </recommendedName>
</protein>
<evidence type="ECO:0000250" key="1">
    <source>
        <dbReference type="UniProtKB" id="P00346"/>
    </source>
</evidence>
<evidence type="ECO:0000250" key="2">
    <source>
        <dbReference type="UniProtKB" id="P40926"/>
    </source>
</evidence>
<evidence type="ECO:0000255" key="3">
    <source>
        <dbReference type="PROSITE-ProRule" id="PRU10004"/>
    </source>
</evidence>
<evidence type="ECO:0000269" key="4">
    <source>
    </source>
</evidence>
<evidence type="ECO:0000269" key="5">
    <source>
    </source>
</evidence>
<evidence type="ECO:0000269" key="6">
    <source>
    </source>
</evidence>
<evidence type="ECO:0000269" key="7">
    <source>
    </source>
</evidence>
<evidence type="ECO:0000305" key="8"/>
<evidence type="ECO:0007744" key="9">
    <source>
    </source>
</evidence>
<proteinExistence type="evidence at protein level"/>
<reference key="1">
    <citation type="journal article" date="1991" name="Mol. Cell. Biol.">
        <title>Isolation, nucleotide sequence analysis, and disruption of the MDH2 gene from Saccharomyces cerevisiae: evidence for three isozymes of yeast malate dehydrogenase.</title>
        <authorList>
            <person name="Minard K.I."/>
            <person name="McAlister-Henn L."/>
        </authorList>
    </citation>
    <scope>NUCLEOTIDE SEQUENCE [GENOMIC DNA]</scope>
    <scope>PROTEIN SEQUENCE OF 2-17</scope>
</reference>
<reference key="2">
    <citation type="journal article" date="1996" name="Yeast">
        <title>Sequence analysis of a 13.4 kbp fragment from the left arm of chromosome XV reveals a malate dehydrogenase gene, a putative Ser/Thr protein kinase, the ribosomal L25 gene and four new open reading frames.</title>
        <authorList>
            <person name="Casamayor A."/>
            <person name="Khalid H."/>
            <person name="Balcells L."/>
            <person name="Aldea M."/>
            <person name="Casas C."/>
            <person name="Herrero E."/>
            <person name="Arino J."/>
        </authorList>
    </citation>
    <scope>NUCLEOTIDE SEQUENCE [GENOMIC DNA]</scope>
    <source>
        <strain>ATCC 96604 / S288c / FY1679</strain>
    </source>
</reference>
<reference key="3">
    <citation type="journal article" date="1997" name="Nature">
        <title>The nucleotide sequence of Saccharomyces cerevisiae chromosome XV.</title>
        <authorList>
            <person name="Dujon B."/>
            <person name="Albermann K."/>
            <person name="Aldea M."/>
            <person name="Alexandraki D."/>
            <person name="Ansorge W."/>
            <person name="Arino J."/>
            <person name="Benes V."/>
            <person name="Bohn C."/>
            <person name="Bolotin-Fukuhara M."/>
            <person name="Bordonne R."/>
            <person name="Boyer J."/>
            <person name="Camasses A."/>
            <person name="Casamayor A."/>
            <person name="Casas C."/>
            <person name="Cheret G."/>
            <person name="Cziepluch C."/>
            <person name="Daignan-Fornier B."/>
            <person name="Dang V.-D."/>
            <person name="de Haan M."/>
            <person name="Delius H."/>
            <person name="Durand P."/>
            <person name="Fairhead C."/>
            <person name="Feldmann H."/>
            <person name="Gaillon L."/>
            <person name="Galisson F."/>
            <person name="Gamo F.-J."/>
            <person name="Gancedo C."/>
            <person name="Goffeau A."/>
            <person name="Goulding S.E."/>
            <person name="Grivell L.A."/>
            <person name="Habbig B."/>
            <person name="Hand N.J."/>
            <person name="Hani J."/>
            <person name="Hattenhorst U."/>
            <person name="Hebling U."/>
            <person name="Hernando Y."/>
            <person name="Herrero E."/>
            <person name="Heumann K."/>
            <person name="Hiesel R."/>
            <person name="Hilger F."/>
            <person name="Hofmann B."/>
            <person name="Hollenberg C.P."/>
            <person name="Hughes B."/>
            <person name="Jauniaux J.-C."/>
            <person name="Kalogeropoulos A."/>
            <person name="Katsoulou C."/>
            <person name="Kordes E."/>
            <person name="Lafuente M.J."/>
            <person name="Landt O."/>
            <person name="Louis E.J."/>
            <person name="Maarse A.C."/>
            <person name="Madania A."/>
            <person name="Mannhaupt G."/>
            <person name="Marck C."/>
            <person name="Martin R.P."/>
            <person name="Mewes H.-W."/>
            <person name="Michaux G."/>
            <person name="Paces V."/>
            <person name="Parle-McDermott A.G."/>
            <person name="Pearson B.M."/>
            <person name="Perrin A."/>
            <person name="Pettersson B."/>
            <person name="Poch O."/>
            <person name="Pohl T.M."/>
            <person name="Poirey R."/>
            <person name="Portetelle D."/>
            <person name="Pujol A."/>
            <person name="Purnelle B."/>
            <person name="Ramezani Rad M."/>
            <person name="Rechmann S."/>
            <person name="Schwager C."/>
            <person name="Schweizer M."/>
            <person name="Sor F."/>
            <person name="Sterky F."/>
            <person name="Tarassov I.A."/>
            <person name="Teodoru C."/>
            <person name="Tettelin H."/>
            <person name="Thierry A."/>
            <person name="Tobiasch E."/>
            <person name="Tzermia M."/>
            <person name="Uhlen M."/>
            <person name="Unseld M."/>
            <person name="Valens M."/>
            <person name="Vandenbol M."/>
            <person name="Vetter I."/>
            <person name="Vlcek C."/>
            <person name="Voet M."/>
            <person name="Volckaert G."/>
            <person name="Voss H."/>
            <person name="Wambutt R."/>
            <person name="Wedler H."/>
            <person name="Wiemann S."/>
            <person name="Winsor B."/>
            <person name="Wolfe K.H."/>
            <person name="Zollner A."/>
            <person name="Zumstein E."/>
            <person name="Kleine K."/>
        </authorList>
    </citation>
    <scope>NUCLEOTIDE SEQUENCE [LARGE SCALE GENOMIC DNA]</scope>
    <source>
        <strain>ATCC 204508 / S288c</strain>
    </source>
</reference>
<reference key="4">
    <citation type="journal article" date="2014" name="G3 (Bethesda)">
        <title>The reference genome sequence of Saccharomyces cerevisiae: Then and now.</title>
        <authorList>
            <person name="Engel S.R."/>
            <person name="Dietrich F.S."/>
            <person name="Fisk D.G."/>
            <person name="Binkley G."/>
            <person name="Balakrishnan R."/>
            <person name="Costanzo M.C."/>
            <person name="Dwight S.S."/>
            <person name="Hitz B.C."/>
            <person name="Karra K."/>
            <person name="Nash R.S."/>
            <person name="Weng S."/>
            <person name="Wong E.D."/>
            <person name="Lloyd P."/>
            <person name="Skrzypek M.S."/>
            <person name="Miyasato S.R."/>
            <person name="Simison M."/>
            <person name="Cherry J.M."/>
        </authorList>
    </citation>
    <scope>GENOME REANNOTATION</scope>
    <source>
        <strain>ATCC 204508 / S288c</strain>
    </source>
</reference>
<reference key="5">
    <citation type="journal article" date="1987" name="Biochim. Biophys. Acta">
        <title>Purification procedure and N-terminal amino acid sequence of yeast malate dehydrogenase isoenzymes.</title>
        <authorList>
            <person name="Kopetzki E."/>
            <person name="Entian K.-D."/>
            <person name="Lottspeich F."/>
            <person name="Mecke D."/>
        </authorList>
    </citation>
    <scope>PROTEIN SEQUENCE OF 2-35</scope>
</reference>
<reference key="6">
    <citation type="journal article" date="2003" name="Nature">
        <title>Global analysis of protein expression in yeast.</title>
        <authorList>
            <person name="Ghaemmaghami S."/>
            <person name="Huh W.-K."/>
            <person name="Bower K."/>
            <person name="Howson R.W."/>
            <person name="Belle A."/>
            <person name="Dephoure N."/>
            <person name="O'Shea E.K."/>
            <person name="Weissman J.S."/>
        </authorList>
    </citation>
    <scope>LEVEL OF PROTEIN EXPRESSION [LARGE SCALE ANALYSIS]</scope>
</reference>
<reference key="7">
    <citation type="journal article" date="2008" name="Mol. Cell. Proteomics">
        <title>A multidimensional chromatography technology for in-depth phosphoproteome analysis.</title>
        <authorList>
            <person name="Albuquerque C.P."/>
            <person name="Smolka M.B."/>
            <person name="Payne S.H."/>
            <person name="Bafna V."/>
            <person name="Eng J."/>
            <person name="Zhou H."/>
        </authorList>
    </citation>
    <scope>PHOSPHORYLATION [LARGE SCALE ANALYSIS] AT THR-6</scope>
    <scope>IDENTIFICATION BY MASS SPECTROMETRY [LARGE SCALE ANALYSIS]</scope>
</reference>
<reference key="8">
    <citation type="journal article" date="2017" name="Science">
        <title>An N-end rule pathway that recognizes proline and destroys gluconeogenic enzymes.</title>
        <authorList>
            <person name="Chen S.J."/>
            <person name="Wu X."/>
            <person name="Wadas B."/>
            <person name="Oh J.H."/>
            <person name="Varshavsky A."/>
        </authorList>
    </citation>
    <scope>DOMAIN</scope>
    <scope>PROTEASOMAL DEGRADATION</scope>
</reference>